<evidence type="ECO:0000255" key="1">
    <source>
        <dbReference type="HAMAP-Rule" id="MF_01423"/>
    </source>
</evidence>
<organism>
    <name type="scientific">Escherichia coli O6:H1 (strain CFT073 / ATCC 700928 / UPEC)</name>
    <dbReference type="NCBI Taxonomy" id="199310"/>
    <lineage>
        <taxon>Bacteria</taxon>
        <taxon>Pseudomonadati</taxon>
        <taxon>Pseudomonadota</taxon>
        <taxon>Gammaproteobacteria</taxon>
        <taxon>Enterobacterales</taxon>
        <taxon>Enterobacteriaceae</taxon>
        <taxon>Escherichia</taxon>
    </lineage>
</organism>
<comment type="function">
    <text evidence="1">The MdtABC tripartite complex confers resistance against novobiocin and deoxycholate.</text>
</comment>
<comment type="subunit">
    <text evidence="1">Part of a tripartite efflux system composed of MdtA, MdtB and MdtC. MdtB forms a heteromultimer with MdtC.</text>
</comment>
<comment type="subcellular location">
    <subcellularLocation>
        <location evidence="1">Cell inner membrane</location>
        <topology evidence="1">Multi-pass membrane protein</topology>
    </subcellularLocation>
</comment>
<comment type="induction">
    <text>The mdtABC operon is transcriptionally activated by BaeR.</text>
</comment>
<comment type="similarity">
    <text evidence="1">Belongs to the resistance-nodulation-cell division (RND) (TC 2.A.6) family. MdtB subfamily.</text>
</comment>
<feature type="chain" id="PRO_0000161822" description="Multidrug resistance protein MdtB">
    <location>
        <begin position="1"/>
        <end position="1040"/>
    </location>
</feature>
<feature type="transmembrane region" description="Helical" evidence="1">
    <location>
        <begin position="15"/>
        <end position="37"/>
    </location>
</feature>
<feature type="transmembrane region" description="Helical" evidence="1">
    <location>
        <begin position="345"/>
        <end position="362"/>
    </location>
</feature>
<feature type="transmembrane region" description="Helical" evidence="1">
    <location>
        <begin position="367"/>
        <end position="389"/>
    </location>
</feature>
<feature type="transmembrane region" description="Helical" evidence="1">
    <location>
        <begin position="396"/>
        <end position="418"/>
    </location>
</feature>
<feature type="transmembrane region" description="Helical" evidence="1">
    <location>
        <begin position="438"/>
        <end position="460"/>
    </location>
</feature>
<feature type="transmembrane region" description="Helical" evidence="1">
    <location>
        <begin position="472"/>
        <end position="494"/>
    </location>
</feature>
<feature type="transmembrane region" description="Helical" evidence="1">
    <location>
        <begin position="535"/>
        <end position="557"/>
    </location>
</feature>
<feature type="transmembrane region" description="Helical" evidence="1">
    <location>
        <begin position="867"/>
        <end position="889"/>
    </location>
</feature>
<feature type="transmembrane region" description="Helical" evidence="1">
    <location>
        <begin position="909"/>
        <end position="931"/>
    </location>
</feature>
<feature type="transmembrane region" description="Helical" evidence="1">
    <location>
        <begin position="968"/>
        <end position="990"/>
    </location>
</feature>
<feature type="transmembrane region" description="Helical" evidence="1">
    <location>
        <begin position="1000"/>
        <end position="1022"/>
    </location>
</feature>
<gene>
    <name evidence="1" type="primary">mdtB</name>
    <name type="ordered locus">c2601</name>
</gene>
<protein>
    <recommendedName>
        <fullName evidence="1">Multidrug resistance protein MdtB</fullName>
    </recommendedName>
    <alternativeName>
        <fullName evidence="1">Multidrug transporter MdtB</fullName>
    </alternativeName>
</protein>
<name>MDTB_ECOL6</name>
<reference key="1">
    <citation type="journal article" date="2002" name="Proc. Natl. Acad. Sci. U.S.A.">
        <title>Extensive mosaic structure revealed by the complete genome sequence of uropathogenic Escherichia coli.</title>
        <authorList>
            <person name="Welch R.A."/>
            <person name="Burland V."/>
            <person name="Plunkett G. III"/>
            <person name="Redford P."/>
            <person name="Roesch P."/>
            <person name="Rasko D."/>
            <person name="Buckles E.L."/>
            <person name="Liou S.-R."/>
            <person name="Boutin A."/>
            <person name="Hackett J."/>
            <person name="Stroud D."/>
            <person name="Mayhew G.F."/>
            <person name="Rose D.J."/>
            <person name="Zhou S."/>
            <person name="Schwartz D.C."/>
            <person name="Perna N.T."/>
            <person name="Mobley H.L.T."/>
            <person name="Donnenberg M.S."/>
            <person name="Blattner F.R."/>
        </authorList>
    </citation>
    <scope>NUCLEOTIDE SEQUENCE [LARGE SCALE GENOMIC DNA]</scope>
    <source>
        <strain>CFT073 / ATCC 700928 / UPEC</strain>
    </source>
</reference>
<dbReference type="EMBL" id="AE014075">
    <property type="protein sequence ID" value="AAN81057.1"/>
    <property type="molecule type" value="Genomic_DNA"/>
</dbReference>
<dbReference type="RefSeq" id="WP_001197878.1">
    <property type="nucleotide sequence ID" value="NZ_CP051263.1"/>
</dbReference>
<dbReference type="SMR" id="Q8FG04"/>
<dbReference type="STRING" id="199310.c2601"/>
<dbReference type="KEGG" id="ecc:c2601"/>
<dbReference type="eggNOG" id="COG0841">
    <property type="taxonomic scope" value="Bacteria"/>
</dbReference>
<dbReference type="HOGENOM" id="CLU_002755_1_2_6"/>
<dbReference type="BioCyc" id="ECOL199310:C2601-MONOMER"/>
<dbReference type="Proteomes" id="UP000001410">
    <property type="component" value="Chromosome"/>
</dbReference>
<dbReference type="GO" id="GO:0005886">
    <property type="term" value="C:plasma membrane"/>
    <property type="evidence" value="ECO:0007669"/>
    <property type="project" value="UniProtKB-SubCell"/>
</dbReference>
<dbReference type="GO" id="GO:0042910">
    <property type="term" value="F:xenobiotic transmembrane transporter activity"/>
    <property type="evidence" value="ECO:0007669"/>
    <property type="project" value="TreeGrafter"/>
</dbReference>
<dbReference type="FunFam" id="1.20.1640.10:FF:000001">
    <property type="entry name" value="Efflux pump membrane transporter"/>
    <property type="match status" value="1"/>
</dbReference>
<dbReference type="FunFam" id="3.30.70.1430:FF:000001">
    <property type="entry name" value="Efflux pump membrane transporter"/>
    <property type="match status" value="1"/>
</dbReference>
<dbReference type="FunFam" id="3.30.2090.10:FF:000003">
    <property type="entry name" value="Multidrug resistance protein MdtB"/>
    <property type="match status" value="1"/>
</dbReference>
<dbReference type="FunFam" id="3.30.2090.10:FF:000006">
    <property type="entry name" value="Multidrug resistance protein MdtB"/>
    <property type="match status" value="1"/>
</dbReference>
<dbReference type="Gene3D" id="3.30.70.1430">
    <property type="entry name" value="Multidrug efflux transporter AcrB pore domain"/>
    <property type="match status" value="2"/>
</dbReference>
<dbReference type="Gene3D" id="3.30.70.1440">
    <property type="entry name" value="Multidrug efflux transporter AcrB pore domain"/>
    <property type="match status" value="1"/>
</dbReference>
<dbReference type="Gene3D" id="3.30.70.1320">
    <property type="entry name" value="Multidrug efflux transporter AcrB pore domain like"/>
    <property type="match status" value="1"/>
</dbReference>
<dbReference type="Gene3D" id="3.30.2090.10">
    <property type="entry name" value="Multidrug efflux transporter AcrB TolC docking domain, DN and DC subdomains"/>
    <property type="match status" value="2"/>
</dbReference>
<dbReference type="Gene3D" id="1.20.1640.10">
    <property type="entry name" value="Multidrug efflux transporter AcrB transmembrane domain"/>
    <property type="match status" value="2"/>
</dbReference>
<dbReference type="HAMAP" id="MF_01423">
    <property type="entry name" value="MdtB"/>
    <property type="match status" value="1"/>
</dbReference>
<dbReference type="InterPro" id="IPR027463">
    <property type="entry name" value="AcrB_DN_DC_subdom"/>
</dbReference>
<dbReference type="InterPro" id="IPR001036">
    <property type="entry name" value="Acrflvin-R"/>
</dbReference>
<dbReference type="InterPro" id="IPR022831">
    <property type="entry name" value="Multidrug-R_MdtB"/>
</dbReference>
<dbReference type="NCBIfam" id="NF007798">
    <property type="entry name" value="PRK10503.1"/>
    <property type="match status" value="1"/>
</dbReference>
<dbReference type="NCBIfam" id="NF033617">
    <property type="entry name" value="RND_permease_2"/>
    <property type="match status" value="1"/>
</dbReference>
<dbReference type="PANTHER" id="PTHR32063">
    <property type="match status" value="1"/>
</dbReference>
<dbReference type="PANTHER" id="PTHR32063:SF21">
    <property type="entry name" value="MULTIDRUG RESISTANCE PROTEIN MDTB"/>
    <property type="match status" value="1"/>
</dbReference>
<dbReference type="Pfam" id="PF00873">
    <property type="entry name" value="ACR_tran"/>
    <property type="match status" value="1"/>
</dbReference>
<dbReference type="PRINTS" id="PR00702">
    <property type="entry name" value="ACRIFLAVINRP"/>
</dbReference>
<dbReference type="SUPFAM" id="SSF82693">
    <property type="entry name" value="Multidrug efflux transporter AcrB pore domain, PN1, PN2, PC1 and PC2 subdomains"/>
    <property type="match status" value="3"/>
</dbReference>
<dbReference type="SUPFAM" id="SSF82714">
    <property type="entry name" value="Multidrug efflux transporter AcrB TolC docking domain, DN and DC subdomains"/>
    <property type="match status" value="2"/>
</dbReference>
<dbReference type="SUPFAM" id="SSF82866">
    <property type="entry name" value="Multidrug efflux transporter AcrB transmembrane domain"/>
    <property type="match status" value="2"/>
</dbReference>
<accession>Q8FG04</accession>
<keyword id="KW-0997">Cell inner membrane</keyword>
<keyword id="KW-1003">Cell membrane</keyword>
<keyword id="KW-0472">Membrane</keyword>
<keyword id="KW-1185">Reference proteome</keyword>
<keyword id="KW-0812">Transmembrane</keyword>
<keyword id="KW-1133">Transmembrane helix</keyword>
<keyword id="KW-0813">Transport</keyword>
<proteinExistence type="evidence at transcript level"/>
<sequence length="1040" mass="112096">MQVLPPSSTGGPSRLFIMRPVATTLLMVAILLAGIIGYRALPVSALPEVDYPTIQVVTLYPGASPDVMTSAVTAPLERQFGQMSGLKQMSSQSSGGASVITLQFQLTLPLDVAEQEVQAAINAATNLLPSDLPNPPVYSKVNPADPPIMTLAVTSTAMPMTQVEDMVETRVAQKISQISGVGLVTLSGGQRPAVRVKLNAQAIAALGLTSETVRTAITGANVNSAKGSLDGPSRAVTLSANDQMQSAEEYRQLIIAYQNGAPIRLGDVATVEQGAENSWLGAWANKEQAIVMNVQRQPGANIISTADSIRQMLPQLTESLPKSVKVTVLSDRTTNIRASVDDTQFELMMAIALVVMIIYLFLRNIPATIIPGVAVPLSLIGTFAVMVFLDFSINNLTLMALTIATGFVVDDAIVVIENISRYIEKGEKPLAAALKGAGEIGFTIISLTFSLIAVLIPLLFMGDIVGRLFREFAITLAVAILISAVVSLTLTPMMCARMLSQESLRKQNRFSRASEKMFDRIIAAYGRGLAKVLNHPWLTLSVALSTLLLSVLLWVFIPKGFFPVQDNGIIQGTLQAPQSSSFANMAQRQRQVADVILQDPAVQSLTSFVGVDGTNPSLNSARLQINLKPLDERDDRVQKVIARLQTAVDKVPGVDLFLQPTQDLTIDTQVSRTQYQFTLQATSLDALSTWVPQLMEKLQQLPQLSDVSSDWQDKGLVAYVNVDRDSASRLGISMADVDNALYNAFGQRLISTIYTQANQYRVVLEHNTENTPGLAALDTIRLTSSDGGVVPLSSIAKIEQRFAPLSINHLDQFPVTTISFNVPDNYSLGDAVQAIMDTEKTLNLPVDITTQFQGSTLAFQSALGSTVWLIVAAVVAMYIVLGILYESFIHPITILSTLPTAGVGALLALMIAGSELDVIAIIGIILLIGIVKKNAIMMIDFALAAEREQGMSPREAIYQACLLRFRPILMTTLAALLGALPLMLSTGVGAELRRPLGIGMVGGLIVSQVLTLFTTPVIYLLFDRLALWTKSRFARHEEEA</sequence>